<feature type="chain" id="PRO_0000404162" description="Uncharacterized protein VP11">
    <location>
        <begin position="1"/>
        <end position="193"/>
    </location>
</feature>
<feature type="region of interest" description="Disordered" evidence="1">
    <location>
        <begin position="158"/>
        <end position="193"/>
    </location>
</feature>
<feature type="compositionally biased region" description="Basic and acidic residues" evidence="1">
    <location>
        <begin position="162"/>
        <end position="174"/>
    </location>
</feature>
<feature type="compositionally biased region" description="Polar residues" evidence="1">
    <location>
        <begin position="177"/>
        <end position="193"/>
    </location>
</feature>
<organismHost>
    <name type="scientific">Micromonas pusilla</name>
    <name type="common">Picoplanktonic green alga</name>
    <name type="synonym">Chromulina pusilla</name>
    <dbReference type="NCBI Taxonomy" id="38833"/>
</organismHost>
<accession>Q1I0U1</accession>
<proteinExistence type="predicted"/>
<reference key="1">
    <citation type="journal article" date="2006" name="J. Gen. Virol.">
        <title>Micromonas pusilla reovirus: a new member of the family Reoviridae assigned to a novel proposed genus (Mimoreovirus).</title>
        <authorList>
            <person name="Attoui H."/>
            <person name="Jaafar F.M."/>
            <person name="Belhouchet M."/>
            <person name="de Micco P."/>
            <person name="de Lamballerie X."/>
            <person name="Brussaard C.P."/>
        </authorList>
    </citation>
    <scope>NUCLEOTIDE SEQUENCE [GENOMIC RNA]</scope>
</reference>
<gene>
    <name type="primary">S11</name>
</gene>
<name>VP11_MPRVN</name>
<keyword id="KW-1185">Reference proteome</keyword>
<dbReference type="EMBL" id="DQ126111">
    <property type="protein sequence ID" value="AAZ94051.1"/>
    <property type="molecule type" value="Genomic_RNA"/>
</dbReference>
<dbReference type="RefSeq" id="YP_654554.1">
    <property type="nucleotide sequence ID" value="NC_008181.1"/>
</dbReference>
<dbReference type="SMR" id="Q1I0U1"/>
<dbReference type="KEGG" id="vg:5076673"/>
<dbReference type="Proteomes" id="UP000000349">
    <property type="component" value="Genome"/>
</dbReference>
<evidence type="ECO:0000256" key="1">
    <source>
        <dbReference type="SAM" id="MobiDB-lite"/>
    </source>
</evidence>
<organism>
    <name type="scientific">Micromonas pusilla reovirus (isolate Netherlands/2005)</name>
    <name type="common">MpRV</name>
    <dbReference type="NCBI Taxonomy" id="649596"/>
    <lineage>
        <taxon>Viruses</taxon>
        <taxon>Riboviria</taxon>
        <taxon>Orthornavirae</taxon>
        <taxon>Duplornaviricota</taxon>
        <taxon>Resentoviricetes</taxon>
        <taxon>Reovirales</taxon>
        <taxon>Sedoreoviridae</taxon>
        <taxon>Mimoreovirus</taxon>
        <taxon>Micromonas pusilla reovirus</taxon>
    </lineage>
</organism>
<protein>
    <recommendedName>
        <fullName>Uncharacterized protein VP11</fullName>
    </recommendedName>
</protein>
<sequence length="193" mass="22258">MALPAIHNWEPYEDSLIRIKHSCFAMHELYRERYLLARTRMMYYDVPIIVLSSVSSVFIAGGDAYMSKSMVQILTCIMSLCVGIIGSLKKFFRVDENREQCLETYKDLFRMFCELAIVMDMPSTSRPGDPQQYSTETSSKYAEIMQRSLVLEGQRTKYNPIYDDHNPLPPEKKKSILSRTRSTKLSSGEITPV</sequence>